<feature type="chain" id="PRO_0000169751" description="UPF0719 inner membrane protein YjfL">
    <location>
        <begin position="1"/>
        <end position="132"/>
    </location>
</feature>
<feature type="topological domain" description="Periplasmic" evidence="2">
    <location>
        <begin position="1"/>
        <end position="6"/>
    </location>
</feature>
<feature type="transmembrane region" description="Helical" evidence="2">
    <location>
        <begin position="7"/>
        <end position="27"/>
    </location>
</feature>
<feature type="topological domain" description="Cytoplasmic" evidence="2">
    <location>
        <begin position="28"/>
        <end position="46"/>
    </location>
</feature>
<feature type="transmembrane region" description="Helical" evidence="2">
    <location>
        <begin position="47"/>
        <end position="67"/>
    </location>
</feature>
<feature type="topological domain" description="Periplasmic" evidence="2">
    <location>
        <begin position="68"/>
        <end position="71"/>
    </location>
</feature>
<feature type="transmembrane region" description="Helical" evidence="2">
    <location>
        <begin position="72"/>
        <end position="92"/>
    </location>
</feature>
<feature type="topological domain" description="Cytoplasmic" evidence="2">
    <location>
        <begin position="93"/>
        <end position="109"/>
    </location>
</feature>
<feature type="transmembrane region" description="Helical" evidence="2">
    <location>
        <begin position="110"/>
        <end position="130"/>
    </location>
</feature>
<feature type="topological domain" description="Periplasmic" evidence="2">
    <location>
        <begin position="131"/>
        <end position="132"/>
    </location>
</feature>
<gene>
    <name type="primary">yjfL</name>
    <name type="ordered locus">Z5791</name>
    <name type="ordered locus">ECs5160</name>
</gene>
<evidence type="ECO:0000250" key="1"/>
<evidence type="ECO:0000255" key="2"/>
<evidence type="ECO:0000305" key="3"/>
<reference key="1">
    <citation type="journal article" date="2001" name="Nature">
        <title>Genome sequence of enterohaemorrhagic Escherichia coli O157:H7.</title>
        <authorList>
            <person name="Perna N.T."/>
            <person name="Plunkett G. III"/>
            <person name="Burland V."/>
            <person name="Mau B."/>
            <person name="Glasner J.D."/>
            <person name="Rose D.J."/>
            <person name="Mayhew G.F."/>
            <person name="Evans P.S."/>
            <person name="Gregor J."/>
            <person name="Kirkpatrick H.A."/>
            <person name="Posfai G."/>
            <person name="Hackett J."/>
            <person name="Klink S."/>
            <person name="Boutin A."/>
            <person name="Shao Y."/>
            <person name="Miller L."/>
            <person name="Grotbeck E.J."/>
            <person name="Davis N.W."/>
            <person name="Lim A."/>
            <person name="Dimalanta E.T."/>
            <person name="Potamousis K."/>
            <person name="Apodaca J."/>
            <person name="Anantharaman T.S."/>
            <person name="Lin J."/>
            <person name="Yen G."/>
            <person name="Schwartz D.C."/>
            <person name="Welch R.A."/>
            <person name="Blattner F.R."/>
        </authorList>
    </citation>
    <scope>NUCLEOTIDE SEQUENCE [LARGE SCALE GENOMIC DNA]</scope>
    <source>
        <strain>O157:H7 / EDL933 / ATCC 700927 / EHEC</strain>
    </source>
</reference>
<reference key="2">
    <citation type="journal article" date="2001" name="DNA Res.">
        <title>Complete genome sequence of enterohemorrhagic Escherichia coli O157:H7 and genomic comparison with a laboratory strain K-12.</title>
        <authorList>
            <person name="Hayashi T."/>
            <person name="Makino K."/>
            <person name="Ohnishi M."/>
            <person name="Kurokawa K."/>
            <person name="Ishii K."/>
            <person name="Yokoyama K."/>
            <person name="Han C.-G."/>
            <person name="Ohtsubo E."/>
            <person name="Nakayama K."/>
            <person name="Murata T."/>
            <person name="Tanaka M."/>
            <person name="Tobe T."/>
            <person name="Iida T."/>
            <person name="Takami H."/>
            <person name="Honda T."/>
            <person name="Sasakawa C."/>
            <person name="Ogasawara N."/>
            <person name="Yasunaga T."/>
            <person name="Kuhara S."/>
            <person name="Shiba T."/>
            <person name="Hattori M."/>
            <person name="Shinagawa H."/>
        </authorList>
    </citation>
    <scope>NUCLEOTIDE SEQUENCE [LARGE SCALE GENOMIC DNA]</scope>
    <source>
        <strain>O157:H7 / Sakai / RIMD 0509952 / EHEC</strain>
    </source>
</reference>
<proteinExistence type="inferred from homology"/>
<keyword id="KW-0997">Cell inner membrane</keyword>
<keyword id="KW-1003">Cell membrane</keyword>
<keyword id="KW-0472">Membrane</keyword>
<keyword id="KW-1185">Reference proteome</keyword>
<keyword id="KW-0812">Transmembrane</keyword>
<keyword id="KW-1133">Transmembrane helix</keyword>
<accession>P0AF81</accession>
<accession>P39294</accession>
<sequence>MHILDSLLAFSAYFFIGVAMVIIFLFIYSKITPHNEWQLIKNNNTAASLAFSGTLLGYVIPLSSAAINAVSIPDYFAWGGIALVIQLLVFAGVRLYMPALSEKIINHNTAAGMFMGTAALAGGIFNAACMTW</sequence>
<protein>
    <recommendedName>
        <fullName>UPF0719 inner membrane protein YjfL</fullName>
    </recommendedName>
</protein>
<organism>
    <name type="scientific">Escherichia coli O157:H7</name>
    <dbReference type="NCBI Taxonomy" id="83334"/>
    <lineage>
        <taxon>Bacteria</taxon>
        <taxon>Pseudomonadati</taxon>
        <taxon>Pseudomonadota</taxon>
        <taxon>Gammaproteobacteria</taxon>
        <taxon>Enterobacterales</taxon>
        <taxon>Enterobacteriaceae</taxon>
        <taxon>Escherichia</taxon>
    </lineage>
</organism>
<name>YJFL_ECO57</name>
<comment type="subcellular location">
    <subcellularLocation>
        <location evidence="1">Cell inner membrane</location>
        <topology evidence="1">Multi-pass membrane protein</topology>
    </subcellularLocation>
</comment>
<comment type="similarity">
    <text evidence="3">Belongs to the UPF0719 family.</text>
</comment>
<dbReference type="EMBL" id="AE005174">
    <property type="protein sequence ID" value="AAG59380.1"/>
    <property type="molecule type" value="Genomic_DNA"/>
</dbReference>
<dbReference type="EMBL" id="BA000007">
    <property type="protein sequence ID" value="BAB38583.1"/>
    <property type="molecule type" value="Genomic_DNA"/>
</dbReference>
<dbReference type="PIR" id="H86114">
    <property type="entry name" value="H86114"/>
</dbReference>
<dbReference type="PIR" id="H91273">
    <property type="entry name" value="H91273"/>
</dbReference>
<dbReference type="RefSeq" id="NP_313187.1">
    <property type="nucleotide sequence ID" value="NC_002695.1"/>
</dbReference>
<dbReference type="RefSeq" id="WP_000547760.1">
    <property type="nucleotide sequence ID" value="NZ_VOAI01000008.1"/>
</dbReference>
<dbReference type="STRING" id="155864.Z5791"/>
<dbReference type="GeneID" id="913304"/>
<dbReference type="KEGG" id="ece:Z5791"/>
<dbReference type="KEGG" id="ecs:ECs_5160"/>
<dbReference type="PATRIC" id="fig|386585.9.peg.5394"/>
<dbReference type="eggNOG" id="COG3766">
    <property type="taxonomic scope" value="Bacteria"/>
</dbReference>
<dbReference type="HOGENOM" id="CLU_122820_0_1_6"/>
<dbReference type="OMA" id="VLNAACM"/>
<dbReference type="Proteomes" id="UP000000558">
    <property type="component" value="Chromosome"/>
</dbReference>
<dbReference type="Proteomes" id="UP000002519">
    <property type="component" value="Chromosome"/>
</dbReference>
<dbReference type="GO" id="GO:0005886">
    <property type="term" value="C:plasma membrane"/>
    <property type="evidence" value="ECO:0007669"/>
    <property type="project" value="UniProtKB-SubCell"/>
</dbReference>
<dbReference type="InterPro" id="IPR007140">
    <property type="entry name" value="DUF350"/>
</dbReference>
<dbReference type="PANTHER" id="PTHR40043">
    <property type="entry name" value="UPF0719 INNER MEMBRANE PROTEIN YJFL"/>
    <property type="match status" value="1"/>
</dbReference>
<dbReference type="PANTHER" id="PTHR40043:SF1">
    <property type="entry name" value="UPF0719 INNER MEMBRANE PROTEIN YJFL"/>
    <property type="match status" value="1"/>
</dbReference>
<dbReference type="Pfam" id="PF03994">
    <property type="entry name" value="DUF350"/>
    <property type="match status" value="1"/>
</dbReference>